<name>PC11X_PIG</name>
<sequence length="1117" mass="123364">MDLLSGTHIFAVLLACIVFQSGAQEKNYTIREEMPENVLIGDLLKDLNLSLIPDRSLTTPMQFKLVYKTGDVPLIRIEEGTGEIFTTGARIDREKLCAGIVVDAHCFYEVEVAVLPDEIFRLVKIRFLIEDINDNAPLFPATVINISIPENSAINSRYALPATIDPDTGINGVQNYHLIKGQSIFGLDVIETPEGEKMPQLIVQKELDREEKDTYVMKIKVEDGGFPQRSSTAILQVSVADTNDNRPVFKENEIEVSIPENAPVGSSVTQLHATDADIGENAKIHFYFSNLISNMAKKLFHLNSTTGLITIKEPLDREESPNHKLLVLASDGGLTPARAMVLVNVTDINDNIPSIDIRYIINPINGTVVLSENAPLNTKIALITVTDKDADHNGWVSCFTDHEVPFRLRPVFSNQFLLETAAYLDYESTREYAIKLLAADAGKPPLNQSSMLLIKVKDENDNAPVFTQPFLSLSVPENNSPGTQLTKISAMDADSGRNAEINYLLGFDAPSEFNLDHRTGILTAVKKLDREKQEKYSFTVLAKDNGMPPLMTNATVLVTVLDQNDNSPVFTHNEYNFYVPENLPRHGTVGLITVTDPDYGENSAVILSILDANDDFTIDPQTGVIQPNISFDREKQESYTFYVKAEDGGRISRSSTAKVTINVVDVNDNKPVFVVPSSNYSFELVPPSTNPGTVVFTVVAIDNDTGMNAELRYSMVGGNTKGLFIIDQTSGNITLKEKCVFADLGLHRLVVKAKDLGQPDSLFNVVNVNLFVNESVTNATLIYELVRKNIETPVTQNIETTDASSPSSDYVKIVVAIVAGTITVILVIFITAVVRCQQSPHLKAAQKNKQNSEWVTPNPENRQMIMMKKKKKKKKKHAPKNLLLNFVTIEEAKADGADNNRSSITLDLPIELEEQTMGKYNWGTTPTTFKPDSADLARHYKSASPQPTFQIQPETPLNSKHHIIQELPLDNTFVGCDSISKCSSSSSDPYSVSECSYPVTTFKTPVSVHTRPPMKEAIRFHTPMKETTTVEIWTHPQPQRKSEGKRAGKSQRRVTFHLPEGSQESSSDGGLGDHDTGSLPSTSHALPLGYPQEEYFDHAAPNNRTEGDGNSDPESGK</sequence>
<accession>Q6KEQ9</accession>
<accession>Q6KEQ6</accession>
<accession>Q6KEQ8</accession>
<comment type="function">
    <text evidence="1">Potential calcium-dependent cell-adhesion protein.</text>
</comment>
<comment type="subcellular location">
    <subcellularLocation>
        <location evidence="6">Cell membrane</location>
        <topology evidence="6">Single-pass type I membrane protein</topology>
    </subcellularLocation>
</comment>
<comment type="tissue specificity">
    <text evidence="5">Expressed in adrenal gland, brain, heart, kidney, lung, prostate, skeletal muscle, testis and thymus.</text>
</comment>
<dbReference type="EMBL" id="AJ564972">
    <property type="protein sequence ID" value="CAD92443.1"/>
    <property type="molecule type" value="mRNA"/>
</dbReference>
<dbReference type="EMBL" id="AJ564973">
    <property type="protein sequence ID" value="CAD92444.1"/>
    <property type="molecule type" value="mRNA"/>
</dbReference>
<dbReference type="EMBL" id="AJ564974">
    <property type="protein sequence ID" value="CAD92445.1"/>
    <property type="molecule type" value="mRNA"/>
</dbReference>
<dbReference type="EMBL" id="AJ564975">
    <property type="protein sequence ID" value="CAD92446.1"/>
    <property type="molecule type" value="mRNA"/>
</dbReference>
<dbReference type="SMR" id="Q6KEQ9"/>
<dbReference type="FunCoup" id="Q6KEQ9">
    <property type="interactions" value="16"/>
</dbReference>
<dbReference type="STRING" id="9823.ENSSSCP00000069209"/>
<dbReference type="GlyCosmos" id="Q6KEQ9">
    <property type="glycosylation" value="4 sites, No reported glycans"/>
</dbReference>
<dbReference type="GlyGen" id="Q6KEQ9">
    <property type="glycosylation" value="4 sites"/>
</dbReference>
<dbReference type="PaxDb" id="9823-ENSSSCP00000027762"/>
<dbReference type="eggNOG" id="ENOG502QPMK">
    <property type="taxonomic scope" value="Eukaryota"/>
</dbReference>
<dbReference type="InParanoid" id="Q6KEQ9"/>
<dbReference type="Proteomes" id="UP000008227">
    <property type="component" value="Unplaced"/>
</dbReference>
<dbReference type="Proteomes" id="UP000314985">
    <property type="component" value="Unplaced"/>
</dbReference>
<dbReference type="Proteomes" id="UP000694570">
    <property type="component" value="Unplaced"/>
</dbReference>
<dbReference type="Proteomes" id="UP000694571">
    <property type="component" value="Unplaced"/>
</dbReference>
<dbReference type="Proteomes" id="UP000694720">
    <property type="component" value="Unplaced"/>
</dbReference>
<dbReference type="Proteomes" id="UP000694722">
    <property type="component" value="Unplaced"/>
</dbReference>
<dbReference type="Proteomes" id="UP000694723">
    <property type="component" value="Unplaced"/>
</dbReference>
<dbReference type="Proteomes" id="UP000694724">
    <property type="component" value="Unplaced"/>
</dbReference>
<dbReference type="Proteomes" id="UP000694725">
    <property type="component" value="Unplaced"/>
</dbReference>
<dbReference type="Proteomes" id="UP000694726">
    <property type="component" value="Unplaced"/>
</dbReference>
<dbReference type="Proteomes" id="UP000694727">
    <property type="component" value="Unplaced"/>
</dbReference>
<dbReference type="Proteomes" id="UP000694728">
    <property type="component" value="Unplaced"/>
</dbReference>
<dbReference type="GO" id="GO:0005886">
    <property type="term" value="C:plasma membrane"/>
    <property type="evidence" value="ECO:0000318"/>
    <property type="project" value="GO_Central"/>
</dbReference>
<dbReference type="GO" id="GO:0005509">
    <property type="term" value="F:calcium ion binding"/>
    <property type="evidence" value="ECO:0007669"/>
    <property type="project" value="InterPro"/>
</dbReference>
<dbReference type="GO" id="GO:0007155">
    <property type="term" value="P:cell adhesion"/>
    <property type="evidence" value="ECO:0000318"/>
    <property type="project" value="GO_Central"/>
</dbReference>
<dbReference type="GO" id="GO:0007156">
    <property type="term" value="P:homophilic cell adhesion via plasma membrane adhesion molecules"/>
    <property type="evidence" value="ECO:0007669"/>
    <property type="project" value="InterPro"/>
</dbReference>
<dbReference type="CDD" id="cd11304">
    <property type="entry name" value="Cadherin_repeat"/>
    <property type="match status" value="7"/>
</dbReference>
<dbReference type="FunFam" id="2.60.40.60:FF:000005">
    <property type="entry name" value="Protocadherin 9"/>
    <property type="match status" value="2"/>
</dbReference>
<dbReference type="FunFam" id="2.60.40.60:FF:000016">
    <property type="entry name" value="Protocadherin 9"/>
    <property type="match status" value="1"/>
</dbReference>
<dbReference type="FunFam" id="2.60.40.60:FF:000030">
    <property type="entry name" value="Protocadherin 9"/>
    <property type="match status" value="1"/>
</dbReference>
<dbReference type="FunFam" id="2.60.40.60:FF:000036">
    <property type="entry name" value="Protocadherin 9"/>
    <property type="match status" value="1"/>
</dbReference>
<dbReference type="FunFam" id="2.60.40.60:FF:000069">
    <property type="entry name" value="Protocadherin-11 X-linked"/>
    <property type="match status" value="1"/>
</dbReference>
<dbReference type="FunFam" id="2.60.40.60:FF:000077">
    <property type="entry name" value="Protocadherin-11 X-linked"/>
    <property type="match status" value="1"/>
</dbReference>
<dbReference type="Gene3D" id="2.60.40.60">
    <property type="entry name" value="Cadherins"/>
    <property type="match status" value="7"/>
</dbReference>
<dbReference type="InterPro" id="IPR002126">
    <property type="entry name" value="Cadherin-like_dom"/>
</dbReference>
<dbReference type="InterPro" id="IPR015919">
    <property type="entry name" value="Cadherin-like_sf"/>
</dbReference>
<dbReference type="InterPro" id="IPR020894">
    <property type="entry name" value="Cadherin_CS"/>
</dbReference>
<dbReference type="InterPro" id="IPR013164">
    <property type="entry name" value="Cadherin_N"/>
</dbReference>
<dbReference type="InterPro" id="IPR013585">
    <property type="entry name" value="Protocadherin"/>
</dbReference>
<dbReference type="InterPro" id="IPR050174">
    <property type="entry name" value="Protocadherin/Cadherin-CA"/>
</dbReference>
<dbReference type="PANTHER" id="PTHR24028">
    <property type="entry name" value="CADHERIN-87A"/>
    <property type="match status" value="1"/>
</dbReference>
<dbReference type="PANTHER" id="PTHR24028:SF254">
    <property type="entry name" value="PROTOCADHERIN-11 X-LINKED-RELATED"/>
    <property type="match status" value="1"/>
</dbReference>
<dbReference type="Pfam" id="PF00028">
    <property type="entry name" value="Cadherin"/>
    <property type="match status" value="6"/>
</dbReference>
<dbReference type="Pfam" id="PF08266">
    <property type="entry name" value="Cadherin_2"/>
    <property type="match status" value="1"/>
</dbReference>
<dbReference type="Pfam" id="PF08374">
    <property type="entry name" value="Protocadherin"/>
    <property type="match status" value="1"/>
</dbReference>
<dbReference type="PRINTS" id="PR00205">
    <property type="entry name" value="CADHERIN"/>
</dbReference>
<dbReference type="SMART" id="SM00112">
    <property type="entry name" value="CA"/>
    <property type="match status" value="7"/>
</dbReference>
<dbReference type="SUPFAM" id="SSF49313">
    <property type="entry name" value="Cadherin-like"/>
    <property type="match status" value="6"/>
</dbReference>
<dbReference type="PROSITE" id="PS00232">
    <property type="entry name" value="CADHERIN_1"/>
    <property type="match status" value="5"/>
</dbReference>
<dbReference type="PROSITE" id="PS50268">
    <property type="entry name" value="CADHERIN_2"/>
    <property type="match status" value="7"/>
</dbReference>
<feature type="signal peptide" evidence="2">
    <location>
        <begin position="1"/>
        <end position="23"/>
    </location>
</feature>
<feature type="chain" id="PRO_0000232763" description="Protocadherin-11 X-linked">
    <location>
        <begin position="24"/>
        <end position="1117"/>
    </location>
</feature>
<feature type="topological domain" description="Extracellular" evidence="2">
    <location>
        <begin position="24"/>
        <end position="812"/>
    </location>
</feature>
<feature type="transmembrane region" description="Helical" evidence="2">
    <location>
        <begin position="813"/>
        <end position="833"/>
    </location>
</feature>
<feature type="topological domain" description="Cytoplasmic" evidence="2">
    <location>
        <begin position="834"/>
        <end position="1117"/>
    </location>
</feature>
<feature type="domain" description="Cadherin 1" evidence="3">
    <location>
        <begin position="27"/>
        <end position="139"/>
    </location>
</feature>
<feature type="domain" description="Cadherin 2" evidence="3">
    <location>
        <begin position="140"/>
        <end position="249"/>
    </location>
</feature>
<feature type="domain" description="Cadherin 3" evidence="3">
    <location>
        <begin position="250"/>
        <end position="355"/>
    </location>
</feature>
<feature type="domain" description="Cadherin 4" evidence="3">
    <location>
        <begin position="362"/>
        <end position="466"/>
    </location>
</feature>
<feature type="domain" description="Cadherin 5" evidence="3">
    <location>
        <begin position="467"/>
        <end position="570"/>
    </location>
</feature>
<feature type="domain" description="Cadherin 6" evidence="3">
    <location>
        <begin position="571"/>
        <end position="673"/>
    </location>
</feature>
<feature type="domain" description="Cadherin 7" evidence="3">
    <location>
        <begin position="677"/>
        <end position="795"/>
    </location>
</feature>
<feature type="region of interest" description="Disordered" evidence="4">
    <location>
        <begin position="1029"/>
        <end position="1117"/>
    </location>
</feature>
<feature type="compositionally biased region" description="Polar residues" evidence="4">
    <location>
        <begin position="1029"/>
        <end position="1039"/>
    </location>
</feature>
<feature type="glycosylation site" description="N-linked (GlcNAc...) asparagine" evidence="2">
    <location>
        <position position="27"/>
    </location>
</feature>
<feature type="glycosylation site" description="N-linked (GlcNAc...) asparagine" evidence="2">
    <location>
        <position position="48"/>
    </location>
</feature>
<feature type="glycosylation site" description="N-linked (GlcNAc...) asparagine" evidence="2">
    <location>
        <position position="344"/>
    </location>
</feature>
<feature type="glycosylation site" description="N-linked (GlcNAc...) asparagine" evidence="2">
    <location>
        <position position="553"/>
    </location>
</feature>
<protein>
    <recommendedName>
        <fullName>Protocadherin-11 X-linked</fullName>
        <shortName>Protocadherin-11</shortName>
    </recommendedName>
    <alternativeName>
        <fullName>Protocadherin on the X chromosome</fullName>
        <shortName>PCDH-X</shortName>
    </alternativeName>
</protein>
<gene>
    <name type="primary">PCDH11X</name>
    <name type="synonym">PCDH11</name>
    <name type="synonym">PCDHX</name>
</gene>
<keyword id="KW-0106">Calcium</keyword>
<keyword id="KW-0130">Cell adhesion</keyword>
<keyword id="KW-1003">Cell membrane</keyword>
<keyword id="KW-0325">Glycoprotein</keyword>
<keyword id="KW-0472">Membrane</keyword>
<keyword id="KW-1185">Reference proteome</keyword>
<keyword id="KW-0677">Repeat</keyword>
<keyword id="KW-0732">Signal</keyword>
<keyword id="KW-0812">Transmembrane</keyword>
<keyword id="KW-1133">Transmembrane helix</keyword>
<proteinExistence type="evidence at transcript level"/>
<evidence type="ECO:0000250" key="1"/>
<evidence type="ECO:0000255" key="2"/>
<evidence type="ECO:0000255" key="3">
    <source>
        <dbReference type="PROSITE-ProRule" id="PRU00043"/>
    </source>
</evidence>
<evidence type="ECO:0000256" key="4">
    <source>
        <dbReference type="SAM" id="MobiDB-lite"/>
    </source>
</evidence>
<evidence type="ECO:0000269" key="5">
    <source>
    </source>
</evidence>
<evidence type="ECO:0000305" key="6"/>
<organism>
    <name type="scientific">Sus scrofa</name>
    <name type="common">Pig</name>
    <dbReference type="NCBI Taxonomy" id="9823"/>
    <lineage>
        <taxon>Eukaryota</taxon>
        <taxon>Metazoa</taxon>
        <taxon>Chordata</taxon>
        <taxon>Craniata</taxon>
        <taxon>Vertebrata</taxon>
        <taxon>Euteleostomi</taxon>
        <taxon>Mammalia</taxon>
        <taxon>Eutheria</taxon>
        <taxon>Laurasiatheria</taxon>
        <taxon>Artiodactyla</taxon>
        <taxon>Suina</taxon>
        <taxon>Suidae</taxon>
        <taxon>Sus</taxon>
    </lineage>
</organism>
<reference key="1">
    <citation type="journal article" date="2004" name="Mamm. Genome">
        <title>A comparative analysis of the pig, mouse, and human PCDHX genes.</title>
        <authorList>
            <person name="Blanco-Arias P."/>
            <person name="Sargent C.A."/>
            <person name="Affara N.A."/>
        </authorList>
    </citation>
    <scope>NUCLEOTIDE SEQUENCE [MRNA]</scope>
    <scope>TISSUE SPECIFICITY</scope>
    <source>
        <tissue>Brain</tissue>
    </source>
</reference>